<organism>
    <name type="scientific">Archaeoglobus fulgidus (strain ATCC 49558 / DSM 4304 / JCM 9628 / NBRC 100126 / VC-16)</name>
    <dbReference type="NCBI Taxonomy" id="224325"/>
    <lineage>
        <taxon>Archaea</taxon>
        <taxon>Methanobacteriati</taxon>
        <taxon>Methanobacteriota</taxon>
        <taxon>Archaeoglobi</taxon>
        <taxon>Archaeoglobales</taxon>
        <taxon>Archaeoglobaceae</taxon>
        <taxon>Archaeoglobus</taxon>
    </lineage>
</organism>
<keyword id="KW-0378">Hydrolase</keyword>
<keyword id="KW-0479">Metal-binding</keyword>
<keyword id="KW-0665">Pyrimidine biosynthesis</keyword>
<keyword id="KW-1185">Reference proteome</keyword>
<keyword id="KW-0862">Zinc</keyword>
<comment type="function">
    <text evidence="1">Catalyzes the reversible cyclization of carbamoyl aspartate to dihydroorotate.</text>
</comment>
<comment type="catalytic activity">
    <reaction evidence="1">
        <text>(S)-dihydroorotate + H2O = N-carbamoyl-L-aspartate + H(+)</text>
        <dbReference type="Rhea" id="RHEA:24296"/>
        <dbReference type="ChEBI" id="CHEBI:15377"/>
        <dbReference type="ChEBI" id="CHEBI:15378"/>
        <dbReference type="ChEBI" id="CHEBI:30864"/>
        <dbReference type="ChEBI" id="CHEBI:32814"/>
        <dbReference type="EC" id="3.5.2.3"/>
    </reaction>
</comment>
<comment type="cofactor">
    <cofactor evidence="1">
        <name>Zn(2+)</name>
        <dbReference type="ChEBI" id="CHEBI:29105"/>
    </cofactor>
    <text evidence="1">Binds 2 Zn(2+) ions per subunit.</text>
</comment>
<comment type="pathway">
    <text evidence="1">Pyrimidine metabolism; UMP biosynthesis via de novo pathway; (S)-dihydroorotate from bicarbonate: step 3/3.</text>
</comment>
<comment type="similarity">
    <text evidence="1">Belongs to the metallo-dependent hydrolases superfamily. DHOase family. Class I DHOase subfamily.</text>
</comment>
<dbReference type="EC" id="3.5.2.3" evidence="1"/>
<dbReference type="EMBL" id="AE000782">
    <property type="protein sequence ID" value="AAB89007.1"/>
    <property type="molecule type" value="Genomic_DNA"/>
</dbReference>
<dbReference type="PIR" id="B69531">
    <property type="entry name" value="B69531"/>
</dbReference>
<dbReference type="RefSeq" id="WP_010879739.1">
    <property type="nucleotide sequence ID" value="NC_000917.1"/>
</dbReference>
<dbReference type="SMR" id="O28034"/>
<dbReference type="STRING" id="224325.AF_2250"/>
<dbReference type="PaxDb" id="224325-AF_2250"/>
<dbReference type="EnsemblBacteria" id="AAB89007">
    <property type="protein sequence ID" value="AAB89007"/>
    <property type="gene ID" value="AF_2250"/>
</dbReference>
<dbReference type="KEGG" id="afu:AF_2250"/>
<dbReference type="eggNOG" id="arCOG00689">
    <property type="taxonomic scope" value="Archaea"/>
</dbReference>
<dbReference type="HOGENOM" id="CLU_015572_1_1_2"/>
<dbReference type="OrthoDB" id="50279at2157"/>
<dbReference type="PhylomeDB" id="O28034"/>
<dbReference type="UniPathway" id="UPA00070">
    <property type="reaction ID" value="UER00117"/>
</dbReference>
<dbReference type="Proteomes" id="UP000002199">
    <property type="component" value="Chromosome"/>
</dbReference>
<dbReference type="GO" id="GO:0005737">
    <property type="term" value="C:cytoplasm"/>
    <property type="evidence" value="ECO:0007669"/>
    <property type="project" value="TreeGrafter"/>
</dbReference>
<dbReference type="GO" id="GO:0004038">
    <property type="term" value="F:allantoinase activity"/>
    <property type="evidence" value="ECO:0007669"/>
    <property type="project" value="TreeGrafter"/>
</dbReference>
<dbReference type="GO" id="GO:0004151">
    <property type="term" value="F:dihydroorotase activity"/>
    <property type="evidence" value="ECO:0007669"/>
    <property type="project" value="UniProtKB-UniRule"/>
</dbReference>
<dbReference type="GO" id="GO:0008270">
    <property type="term" value="F:zinc ion binding"/>
    <property type="evidence" value="ECO:0007669"/>
    <property type="project" value="UniProtKB-UniRule"/>
</dbReference>
<dbReference type="GO" id="GO:0044205">
    <property type="term" value="P:'de novo' UMP biosynthetic process"/>
    <property type="evidence" value="ECO:0007669"/>
    <property type="project" value="UniProtKB-UniRule"/>
</dbReference>
<dbReference type="GO" id="GO:0006145">
    <property type="term" value="P:purine nucleobase catabolic process"/>
    <property type="evidence" value="ECO:0007669"/>
    <property type="project" value="TreeGrafter"/>
</dbReference>
<dbReference type="CDD" id="cd01318">
    <property type="entry name" value="DHOase_IIb"/>
    <property type="match status" value="1"/>
</dbReference>
<dbReference type="Gene3D" id="3.20.20.140">
    <property type="entry name" value="Metal-dependent hydrolases"/>
    <property type="match status" value="1"/>
</dbReference>
<dbReference type="HAMAP" id="MF_00220_A">
    <property type="entry name" value="PyrC_classI_A"/>
    <property type="match status" value="1"/>
</dbReference>
<dbReference type="InterPro" id="IPR006680">
    <property type="entry name" value="Amidohydro-rel"/>
</dbReference>
<dbReference type="InterPro" id="IPR004722">
    <property type="entry name" value="DHOase"/>
</dbReference>
<dbReference type="InterPro" id="IPR050138">
    <property type="entry name" value="DHOase/Allantoinase_Hydrolase"/>
</dbReference>
<dbReference type="InterPro" id="IPR002195">
    <property type="entry name" value="Dihydroorotase_CS"/>
</dbReference>
<dbReference type="InterPro" id="IPR011059">
    <property type="entry name" value="Metal-dep_hydrolase_composite"/>
</dbReference>
<dbReference type="InterPro" id="IPR032466">
    <property type="entry name" value="Metal_Hydrolase"/>
</dbReference>
<dbReference type="NCBIfam" id="NF003271">
    <property type="entry name" value="PRK04250.1"/>
    <property type="match status" value="1"/>
</dbReference>
<dbReference type="NCBIfam" id="TIGR00857">
    <property type="entry name" value="pyrC_multi"/>
    <property type="match status" value="1"/>
</dbReference>
<dbReference type="PANTHER" id="PTHR43668">
    <property type="entry name" value="ALLANTOINASE"/>
    <property type="match status" value="1"/>
</dbReference>
<dbReference type="PANTHER" id="PTHR43668:SF2">
    <property type="entry name" value="ALLANTOINASE"/>
    <property type="match status" value="1"/>
</dbReference>
<dbReference type="Pfam" id="PF01979">
    <property type="entry name" value="Amidohydro_1"/>
    <property type="match status" value="1"/>
</dbReference>
<dbReference type="SUPFAM" id="SSF51338">
    <property type="entry name" value="Composite domain of metallo-dependent hydrolases"/>
    <property type="match status" value="1"/>
</dbReference>
<dbReference type="SUPFAM" id="SSF51556">
    <property type="entry name" value="Metallo-dependent hydrolases"/>
    <property type="match status" value="1"/>
</dbReference>
<dbReference type="PROSITE" id="PS00482">
    <property type="entry name" value="DIHYDROOROTASE_1"/>
    <property type="match status" value="1"/>
</dbReference>
<dbReference type="PROSITE" id="PS00483">
    <property type="entry name" value="DIHYDROOROTASE_2"/>
    <property type="match status" value="1"/>
</dbReference>
<feature type="chain" id="PRO_0000147267" description="Dihydroorotase">
    <location>
        <begin position="1"/>
        <end position="403"/>
    </location>
</feature>
<feature type="active site" evidence="1">
    <location>
        <position position="277"/>
    </location>
</feature>
<feature type="binding site" evidence="1">
    <location>
        <position position="48"/>
    </location>
    <ligand>
        <name>Zn(2+)</name>
        <dbReference type="ChEBI" id="CHEBI:29105"/>
        <label>1</label>
    </ligand>
</feature>
<feature type="binding site" evidence="1">
    <location>
        <begin position="50"/>
        <end position="52"/>
    </location>
    <ligand>
        <name>substrate</name>
    </ligand>
</feature>
<feature type="binding site" evidence="1">
    <location>
        <position position="50"/>
    </location>
    <ligand>
        <name>Zn(2+)</name>
        <dbReference type="ChEBI" id="CHEBI:29105"/>
        <label>1</label>
    </ligand>
</feature>
<feature type="binding site" evidence="1">
    <location>
        <position position="82"/>
    </location>
    <ligand>
        <name>substrate</name>
    </ligand>
</feature>
<feature type="binding site" evidence="1">
    <location>
        <position position="140"/>
    </location>
    <ligand>
        <name>Zn(2+)</name>
        <dbReference type="ChEBI" id="CHEBI:29105"/>
        <label>1</label>
    </ligand>
</feature>
<feature type="binding site" evidence="1">
    <location>
        <position position="140"/>
    </location>
    <ligand>
        <name>Zn(2+)</name>
        <dbReference type="ChEBI" id="CHEBI:29105"/>
        <label>2</label>
    </ligand>
</feature>
<feature type="binding site" evidence="1">
    <location>
        <position position="172"/>
    </location>
    <ligand>
        <name>Zn(2+)</name>
        <dbReference type="ChEBI" id="CHEBI:29105"/>
        <label>2</label>
    </ligand>
</feature>
<feature type="binding site" evidence="1">
    <location>
        <position position="211"/>
    </location>
    <ligand>
        <name>Zn(2+)</name>
        <dbReference type="ChEBI" id="CHEBI:29105"/>
        <label>2</label>
    </ligand>
</feature>
<feature type="binding site" evidence="1">
    <location>
        <position position="277"/>
    </location>
    <ligand>
        <name>Zn(2+)</name>
        <dbReference type="ChEBI" id="CHEBI:29105"/>
        <label>1</label>
    </ligand>
</feature>
<feature type="binding site" evidence="1">
    <location>
        <position position="281"/>
    </location>
    <ligand>
        <name>substrate</name>
    </ligand>
</feature>
<evidence type="ECO:0000255" key="1">
    <source>
        <dbReference type="HAMAP-Rule" id="MF_00220"/>
    </source>
</evidence>
<protein>
    <recommendedName>
        <fullName evidence="1">Dihydroorotase</fullName>
        <shortName evidence="1">DHOase</shortName>
        <ecNumber evidence="1">3.5.2.3</ecNumber>
    </recommendedName>
</protein>
<gene>
    <name evidence="1" type="primary">pyrC</name>
    <name type="ordered locus">AF_2250</name>
</gene>
<name>PYRC_ARCFU</name>
<accession>O28034</accession>
<sequence length="403" mass="45559">MIRGKVFYKGEFVEAGIEVENGRIKRIGKLVEGKEVKGVILPAGIDVHVHLRDFAEKRKETIETGTLSALHGGICLVVDQPNTKPPVDDAETYFRRMGKAEKSVYVDYALNLALTNSNHGKIGSIMRKISERYFVPAVGEVFIQHDSEDLQIDYETLSSVYKRFEGVVFTIHAEDPAYVARGSPNFVFRRREAEVLAVERLVELGKFHFCHISTKDSAKEILNSNSTYEVTPHHMLLSVEDYGRLGNLVNVNPPLREREDVEWLFRNFHRIDVLASDHAPHTLEDKEAGASGFPGVETMYPLFVNLASKGYISFKTLVEKIASNPARIFGFKGYGEIEVGNYANFAVFDLKKVDEIRAERLHSKCGWTPFEGFEAVFPDKVYLRGKELLENEMKAGNVLKKRV</sequence>
<reference key="1">
    <citation type="journal article" date="1997" name="Nature">
        <title>The complete genome sequence of the hyperthermophilic, sulphate-reducing archaeon Archaeoglobus fulgidus.</title>
        <authorList>
            <person name="Klenk H.-P."/>
            <person name="Clayton R.A."/>
            <person name="Tomb J.-F."/>
            <person name="White O."/>
            <person name="Nelson K.E."/>
            <person name="Ketchum K.A."/>
            <person name="Dodson R.J."/>
            <person name="Gwinn M.L."/>
            <person name="Hickey E.K."/>
            <person name="Peterson J.D."/>
            <person name="Richardson D.L."/>
            <person name="Kerlavage A.R."/>
            <person name="Graham D.E."/>
            <person name="Kyrpides N.C."/>
            <person name="Fleischmann R.D."/>
            <person name="Quackenbush J."/>
            <person name="Lee N.H."/>
            <person name="Sutton G.G."/>
            <person name="Gill S.R."/>
            <person name="Kirkness E.F."/>
            <person name="Dougherty B.A."/>
            <person name="McKenney K."/>
            <person name="Adams M.D."/>
            <person name="Loftus B.J."/>
            <person name="Peterson S.N."/>
            <person name="Reich C.I."/>
            <person name="McNeil L.K."/>
            <person name="Badger J.H."/>
            <person name="Glodek A."/>
            <person name="Zhou L."/>
            <person name="Overbeek R."/>
            <person name="Gocayne J.D."/>
            <person name="Weidman J.F."/>
            <person name="McDonald L.A."/>
            <person name="Utterback T.R."/>
            <person name="Cotton M.D."/>
            <person name="Spriggs T."/>
            <person name="Artiach P."/>
            <person name="Kaine B.P."/>
            <person name="Sykes S.M."/>
            <person name="Sadow P.W."/>
            <person name="D'Andrea K.P."/>
            <person name="Bowman C."/>
            <person name="Fujii C."/>
            <person name="Garland S.A."/>
            <person name="Mason T.M."/>
            <person name="Olsen G.J."/>
            <person name="Fraser C.M."/>
            <person name="Smith H.O."/>
            <person name="Woese C.R."/>
            <person name="Venter J.C."/>
        </authorList>
    </citation>
    <scope>NUCLEOTIDE SEQUENCE [LARGE SCALE GENOMIC DNA]</scope>
    <source>
        <strain>ATCC 49558 / DSM 4304 / JCM 9628 / NBRC 100126 / VC-16</strain>
    </source>
</reference>
<proteinExistence type="inferred from homology"/>